<dbReference type="EMBL" id="S83542">
    <property type="protein sequence ID" value="AAB50798.2"/>
    <property type="molecule type" value="mRNA"/>
</dbReference>
<dbReference type="GO" id="GO:0072562">
    <property type="term" value="C:blood microparticle"/>
    <property type="evidence" value="ECO:0007669"/>
    <property type="project" value="TreeGrafter"/>
</dbReference>
<dbReference type="GO" id="GO:0031838">
    <property type="term" value="C:haptoglobin-hemoglobin complex"/>
    <property type="evidence" value="ECO:0007669"/>
    <property type="project" value="TreeGrafter"/>
</dbReference>
<dbReference type="GO" id="GO:0005833">
    <property type="term" value="C:hemoglobin complex"/>
    <property type="evidence" value="ECO:0007669"/>
    <property type="project" value="InterPro"/>
</dbReference>
<dbReference type="GO" id="GO:0031720">
    <property type="term" value="F:haptoglobin binding"/>
    <property type="evidence" value="ECO:0007669"/>
    <property type="project" value="TreeGrafter"/>
</dbReference>
<dbReference type="GO" id="GO:0020037">
    <property type="term" value="F:heme binding"/>
    <property type="evidence" value="ECO:0007669"/>
    <property type="project" value="InterPro"/>
</dbReference>
<dbReference type="GO" id="GO:0046872">
    <property type="term" value="F:metal ion binding"/>
    <property type="evidence" value="ECO:0007669"/>
    <property type="project" value="UniProtKB-KW"/>
</dbReference>
<dbReference type="GO" id="GO:0043177">
    <property type="term" value="F:organic acid binding"/>
    <property type="evidence" value="ECO:0007669"/>
    <property type="project" value="TreeGrafter"/>
</dbReference>
<dbReference type="GO" id="GO:0019825">
    <property type="term" value="F:oxygen binding"/>
    <property type="evidence" value="ECO:0007669"/>
    <property type="project" value="InterPro"/>
</dbReference>
<dbReference type="GO" id="GO:0005344">
    <property type="term" value="F:oxygen carrier activity"/>
    <property type="evidence" value="ECO:0007669"/>
    <property type="project" value="UniProtKB-KW"/>
</dbReference>
<dbReference type="GO" id="GO:0004601">
    <property type="term" value="F:peroxidase activity"/>
    <property type="evidence" value="ECO:0007669"/>
    <property type="project" value="TreeGrafter"/>
</dbReference>
<dbReference type="GO" id="GO:0042744">
    <property type="term" value="P:hydrogen peroxide catabolic process"/>
    <property type="evidence" value="ECO:0007669"/>
    <property type="project" value="TreeGrafter"/>
</dbReference>
<dbReference type="CDD" id="cd08925">
    <property type="entry name" value="Hb-beta-like"/>
    <property type="match status" value="1"/>
</dbReference>
<dbReference type="FunFam" id="1.10.490.10:FF:000001">
    <property type="entry name" value="Hemoglobin subunit beta"/>
    <property type="match status" value="1"/>
</dbReference>
<dbReference type="Gene3D" id="1.10.490.10">
    <property type="entry name" value="Globins"/>
    <property type="match status" value="1"/>
</dbReference>
<dbReference type="InterPro" id="IPR000971">
    <property type="entry name" value="Globin"/>
</dbReference>
<dbReference type="InterPro" id="IPR009050">
    <property type="entry name" value="Globin-like_sf"/>
</dbReference>
<dbReference type="InterPro" id="IPR012292">
    <property type="entry name" value="Globin/Proto"/>
</dbReference>
<dbReference type="InterPro" id="IPR002337">
    <property type="entry name" value="Hemoglobin_b"/>
</dbReference>
<dbReference type="InterPro" id="IPR050056">
    <property type="entry name" value="Hemoglobin_oxygen_transport"/>
</dbReference>
<dbReference type="PANTHER" id="PTHR11442">
    <property type="entry name" value="HEMOGLOBIN FAMILY MEMBER"/>
    <property type="match status" value="1"/>
</dbReference>
<dbReference type="PANTHER" id="PTHR11442:SF102">
    <property type="entry name" value="HEMOGLOBIN SUBUNIT BETA-1-RELATED"/>
    <property type="match status" value="1"/>
</dbReference>
<dbReference type="Pfam" id="PF00042">
    <property type="entry name" value="Globin"/>
    <property type="match status" value="1"/>
</dbReference>
<dbReference type="PRINTS" id="PR00814">
    <property type="entry name" value="BETAHAEM"/>
</dbReference>
<dbReference type="SUPFAM" id="SSF46458">
    <property type="entry name" value="Globin-like"/>
    <property type="match status" value="1"/>
</dbReference>
<dbReference type="PROSITE" id="PS01033">
    <property type="entry name" value="GLOBIN"/>
    <property type="match status" value="1"/>
</dbReference>
<organism>
    <name type="scientific">Decapterus maruadsi</name>
    <name type="common">Japanese scad</name>
    <name type="synonym">Caranx maruadsi</name>
    <dbReference type="NCBI Taxonomy" id="58220"/>
    <lineage>
        <taxon>Eukaryota</taxon>
        <taxon>Metazoa</taxon>
        <taxon>Chordata</taxon>
        <taxon>Craniata</taxon>
        <taxon>Vertebrata</taxon>
        <taxon>Euteleostomi</taxon>
        <taxon>Actinopterygii</taxon>
        <taxon>Neopterygii</taxon>
        <taxon>Teleostei</taxon>
        <taxon>Neoteleostei</taxon>
        <taxon>Acanthomorphata</taxon>
        <taxon>Carangaria</taxon>
        <taxon>Carangiformes</taxon>
        <taxon>Carangidae</taxon>
        <taxon>Decapterus</taxon>
    </lineage>
</organism>
<reference key="1">
    <citation type="journal article" date="1996" name="J. Protein Chem.">
        <title>PCR amplification of cDNAs of fish hemoglobin beta chains using a consensus primer: cDNA-derived amino acid sequences of beta chains from the catfish Parasilurus asotus and the scad Decapterus maruadsi.</title>
        <authorList>
            <person name="Suzuki T."/>
            <person name="Nishikawa T."/>
        </authorList>
    </citation>
    <scope>NUCLEOTIDE SEQUENCE [MRNA]</scope>
    <source>
        <tissue>Blood</tissue>
    </source>
</reference>
<accession>O13164</accession>
<feature type="initiator methionine" description="Removed">
    <location>
        <position position="1"/>
    </location>
</feature>
<feature type="chain" id="PRO_0000052947" description="Hemoglobin subunit beta">
    <location>
        <begin position="2"/>
        <end position="148"/>
    </location>
</feature>
<feature type="domain" description="Globin" evidence="1">
    <location>
        <begin position="3"/>
        <end position="148"/>
    </location>
</feature>
<feature type="binding site" description="distal binding residue">
    <location>
        <position position="64"/>
    </location>
    <ligand>
        <name>heme b</name>
        <dbReference type="ChEBI" id="CHEBI:60344"/>
    </ligand>
    <ligandPart>
        <name>Fe</name>
        <dbReference type="ChEBI" id="CHEBI:18248"/>
    </ligandPart>
</feature>
<feature type="binding site" description="proximal binding residue">
    <location>
        <position position="93"/>
    </location>
    <ligand>
        <name>heme b</name>
        <dbReference type="ChEBI" id="CHEBI:60344"/>
    </ligand>
    <ligandPart>
        <name>Fe</name>
        <dbReference type="ChEBI" id="CHEBI:18248"/>
    </ligandPart>
</feature>
<gene>
    <name type="primary">hbb</name>
</gene>
<comment type="function">
    <text>Involved in oxygen transport from gills to the various peripheral tissues.</text>
</comment>
<comment type="subunit">
    <text>Heterotetramer of two alpha chains and two beta chains.</text>
</comment>
<comment type="tissue specificity">
    <text>Red blood cells.</text>
</comment>
<comment type="similarity">
    <text evidence="1">Belongs to the globin family.</text>
</comment>
<proteinExistence type="evidence at transcript level"/>
<evidence type="ECO:0000255" key="1">
    <source>
        <dbReference type="PROSITE-ProRule" id="PRU00238"/>
    </source>
</evidence>
<keyword id="KW-0349">Heme</keyword>
<keyword id="KW-0408">Iron</keyword>
<keyword id="KW-0479">Metal-binding</keyword>
<keyword id="KW-0561">Oxygen transport</keyword>
<keyword id="KW-0813">Transport</keyword>
<sequence length="148" mass="16320">MVXWTDXERAAITSLWGKIDVGEIGPQALARLLIVYPWTQRHFSTFGNLSTNAAILGNPKVAAHGKTVMGGLELAVKNMDNIKGAYANLSKMHSEKIHVDPDNFRLLAEITTICLAAKFGPSVFTPDFQEAWQKFENAVVSALGRQYH</sequence>
<name>HBB_DECMA</name>
<protein>
    <recommendedName>
        <fullName>Hemoglobin subunit beta</fullName>
    </recommendedName>
    <alternativeName>
        <fullName>Beta-globin</fullName>
    </alternativeName>
    <alternativeName>
        <fullName>Hemoglobin beta chain</fullName>
    </alternativeName>
</protein>